<comment type="function">
    <text evidence="1">Involved in the small subunit (SSU) processome assembly and function, and in the 18S rRNA synthesis. Required for the early cleavages at sites A0, A1 and A2 (By similarity).</text>
</comment>
<comment type="subcellular location">
    <subcellularLocation>
        <location evidence="1">Nucleus</location>
        <location evidence="1">Nucleolus</location>
    </subcellularLocation>
</comment>
<comment type="similarity">
    <text evidence="3">Belongs to the ESF2/ABP1 family.</text>
</comment>
<keyword id="KW-0539">Nucleus</keyword>
<keyword id="KW-1185">Reference proteome</keyword>
<keyword id="KW-0690">Ribosome biogenesis</keyword>
<keyword id="KW-0694">RNA-binding</keyword>
<keyword id="KW-0698">rRNA processing</keyword>
<proteinExistence type="inferred from homology"/>
<dbReference type="EMBL" id="CR382136">
    <property type="protein sequence ID" value="CAG86889.2"/>
    <property type="molecule type" value="Genomic_DNA"/>
</dbReference>
<dbReference type="RefSeq" id="XP_458745.2">
    <property type="nucleotide sequence ID" value="XM_458745.1"/>
</dbReference>
<dbReference type="FunCoup" id="Q6BSS5">
    <property type="interactions" value="1005"/>
</dbReference>
<dbReference type="STRING" id="284592.Q6BSS5"/>
<dbReference type="GeneID" id="2901551"/>
<dbReference type="KEGG" id="dha:DEHA2D06600g"/>
<dbReference type="VEuPathDB" id="FungiDB:DEHA2D06600g"/>
<dbReference type="eggNOG" id="KOG3152">
    <property type="taxonomic scope" value="Eukaryota"/>
</dbReference>
<dbReference type="HOGENOM" id="CLU_054086_0_0_1"/>
<dbReference type="InParanoid" id="Q6BSS5"/>
<dbReference type="OMA" id="TRKHNDF"/>
<dbReference type="OrthoDB" id="287393at2759"/>
<dbReference type="Proteomes" id="UP000000599">
    <property type="component" value="Chromosome D"/>
</dbReference>
<dbReference type="GO" id="GO:0005730">
    <property type="term" value="C:nucleolus"/>
    <property type="evidence" value="ECO:0007669"/>
    <property type="project" value="UniProtKB-SubCell"/>
</dbReference>
<dbReference type="GO" id="GO:0003723">
    <property type="term" value="F:RNA binding"/>
    <property type="evidence" value="ECO:0007669"/>
    <property type="project" value="UniProtKB-KW"/>
</dbReference>
<dbReference type="GO" id="GO:0000480">
    <property type="term" value="P:endonucleolytic cleavage in 5'-ETS of tricistronic rRNA transcript (SSU-rRNA, 5.8S rRNA, LSU-rRNA)"/>
    <property type="evidence" value="ECO:0007669"/>
    <property type="project" value="TreeGrafter"/>
</dbReference>
<dbReference type="GO" id="GO:0000447">
    <property type="term" value="P:endonucleolytic cleavage in ITS1 to separate SSU-rRNA from 5.8S rRNA and LSU-rRNA from tricistronic rRNA transcript (SSU-rRNA, 5.8S rRNA, LSU-rRNA)"/>
    <property type="evidence" value="ECO:0007669"/>
    <property type="project" value="TreeGrafter"/>
</dbReference>
<dbReference type="GO" id="GO:0000472">
    <property type="term" value="P:endonucleolytic cleavage to generate mature 5'-end of SSU-rRNA from (SSU-rRNA, 5.8S rRNA, LSU-rRNA)"/>
    <property type="evidence" value="ECO:0007669"/>
    <property type="project" value="TreeGrafter"/>
</dbReference>
<dbReference type="GO" id="GO:0034462">
    <property type="term" value="P:small-subunit processome assembly"/>
    <property type="evidence" value="ECO:0007669"/>
    <property type="project" value="TreeGrafter"/>
</dbReference>
<dbReference type="CDD" id="cd12263">
    <property type="entry name" value="RRM_ABT1_like"/>
    <property type="match status" value="1"/>
</dbReference>
<dbReference type="Gene3D" id="3.30.70.330">
    <property type="match status" value="1"/>
</dbReference>
<dbReference type="InterPro" id="IPR039119">
    <property type="entry name" value="ABT1/Esf2"/>
</dbReference>
<dbReference type="InterPro" id="IPR034353">
    <property type="entry name" value="ABT1/ESF2_RRM"/>
</dbReference>
<dbReference type="InterPro" id="IPR012677">
    <property type="entry name" value="Nucleotide-bd_a/b_plait_sf"/>
</dbReference>
<dbReference type="InterPro" id="IPR035979">
    <property type="entry name" value="RBD_domain_sf"/>
</dbReference>
<dbReference type="PANTHER" id="PTHR12311">
    <property type="entry name" value="ACTIVATOR OF BASAL TRANSCRIPTION 1"/>
    <property type="match status" value="1"/>
</dbReference>
<dbReference type="PANTHER" id="PTHR12311:SF7">
    <property type="entry name" value="ACTIVATOR OF BASAL TRANSCRIPTION 1"/>
    <property type="match status" value="1"/>
</dbReference>
<dbReference type="SUPFAM" id="SSF54928">
    <property type="entry name" value="RNA-binding domain, RBD"/>
    <property type="match status" value="1"/>
</dbReference>
<protein>
    <recommendedName>
        <fullName>Pre-rRNA-processing protein ESF2</fullName>
    </recommendedName>
    <alternativeName>
        <fullName>18S rRNA factor 2</fullName>
    </alternativeName>
</protein>
<feature type="chain" id="PRO_0000285371" description="Pre-rRNA-processing protein ESF2">
    <location>
        <begin position="1"/>
        <end position="303"/>
    </location>
</feature>
<feature type="domain" description="RRM">
    <location>
        <begin position="96"/>
        <end position="186"/>
    </location>
</feature>
<feature type="region of interest" description="Disordered" evidence="2">
    <location>
        <begin position="1"/>
        <end position="25"/>
    </location>
</feature>
<feature type="region of interest" description="Disordered" evidence="2">
    <location>
        <begin position="243"/>
        <end position="303"/>
    </location>
</feature>
<feature type="compositionally biased region" description="Acidic residues" evidence="2">
    <location>
        <begin position="1"/>
        <end position="21"/>
    </location>
</feature>
<feature type="compositionally biased region" description="Basic and acidic residues" evidence="2">
    <location>
        <begin position="258"/>
        <end position="267"/>
    </location>
</feature>
<feature type="compositionally biased region" description="Basic and acidic residues" evidence="2">
    <location>
        <begin position="284"/>
        <end position="296"/>
    </location>
</feature>
<gene>
    <name type="primary">ESF2</name>
    <name type="ordered locus">DEHA2D06600g</name>
</gene>
<evidence type="ECO:0000250" key="1"/>
<evidence type="ECO:0000256" key="2">
    <source>
        <dbReference type="SAM" id="MobiDB-lite"/>
    </source>
</evidence>
<evidence type="ECO:0000305" key="3"/>
<sequence length="303" mass="35207">MIQDESDLDDFEDDEEDDEDEKVFNISKKASHIDNFKNEESEDEEDLNEEDDDLFMNTDIIDEETIENSKQAKNINLKKLTPEQLAKEQKKIKKTGVCYLSKIPPYMKPAKLRSVLSRFGKIDRLFLKPEDNSTYTKRVKYGGNKKKNYTAGWVEFINKKDAKLCAGTLNGNKLGGKKSSYYYDDIINIKYLSAFKWFDLTQQIAKENEIRQAKLSMELSQQQKLNKSFINNVEKSKMINNMQNKRKARQAESGADNSNKEESDIRRNLKQRKLASTRADAEDELKHKSKPNEKLNDVLSKVF</sequence>
<reference key="1">
    <citation type="journal article" date="2004" name="Nature">
        <title>Genome evolution in yeasts.</title>
        <authorList>
            <person name="Dujon B."/>
            <person name="Sherman D."/>
            <person name="Fischer G."/>
            <person name="Durrens P."/>
            <person name="Casaregola S."/>
            <person name="Lafontaine I."/>
            <person name="de Montigny J."/>
            <person name="Marck C."/>
            <person name="Neuveglise C."/>
            <person name="Talla E."/>
            <person name="Goffard N."/>
            <person name="Frangeul L."/>
            <person name="Aigle M."/>
            <person name="Anthouard V."/>
            <person name="Babour A."/>
            <person name="Barbe V."/>
            <person name="Barnay S."/>
            <person name="Blanchin S."/>
            <person name="Beckerich J.-M."/>
            <person name="Beyne E."/>
            <person name="Bleykasten C."/>
            <person name="Boisrame A."/>
            <person name="Boyer J."/>
            <person name="Cattolico L."/>
            <person name="Confanioleri F."/>
            <person name="de Daruvar A."/>
            <person name="Despons L."/>
            <person name="Fabre E."/>
            <person name="Fairhead C."/>
            <person name="Ferry-Dumazet H."/>
            <person name="Groppi A."/>
            <person name="Hantraye F."/>
            <person name="Hennequin C."/>
            <person name="Jauniaux N."/>
            <person name="Joyet P."/>
            <person name="Kachouri R."/>
            <person name="Kerrest A."/>
            <person name="Koszul R."/>
            <person name="Lemaire M."/>
            <person name="Lesur I."/>
            <person name="Ma L."/>
            <person name="Muller H."/>
            <person name="Nicaud J.-M."/>
            <person name="Nikolski M."/>
            <person name="Oztas S."/>
            <person name="Ozier-Kalogeropoulos O."/>
            <person name="Pellenz S."/>
            <person name="Potier S."/>
            <person name="Richard G.-F."/>
            <person name="Straub M.-L."/>
            <person name="Suleau A."/>
            <person name="Swennen D."/>
            <person name="Tekaia F."/>
            <person name="Wesolowski-Louvel M."/>
            <person name="Westhof E."/>
            <person name="Wirth B."/>
            <person name="Zeniou-Meyer M."/>
            <person name="Zivanovic Y."/>
            <person name="Bolotin-Fukuhara M."/>
            <person name="Thierry A."/>
            <person name="Bouchier C."/>
            <person name="Caudron B."/>
            <person name="Scarpelli C."/>
            <person name="Gaillardin C."/>
            <person name="Weissenbach J."/>
            <person name="Wincker P."/>
            <person name="Souciet J.-L."/>
        </authorList>
    </citation>
    <scope>NUCLEOTIDE SEQUENCE [LARGE SCALE GENOMIC DNA]</scope>
    <source>
        <strain>ATCC 36239 / CBS 767 / BCRC 21394 / JCM 1990 / NBRC 0083 / IGC 2968</strain>
    </source>
</reference>
<accession>Q6BSS5</accession>
<name>ESF2_DEBHA</name>
<organism>
    <name type="scientific">Debaryomyces hansenii (strain ATCC 36239 / CBS 767 / BCRC 21394 / JCM 1990 / NBRC 0083 / IGC 2968)</name>
    <name type="common">Yeast</name>
    <name type="synonym">Torulaspora hansenii</name>
    <dbReference type="NCBI Taxonomy" id="284592"/>
    <lineage>
        <taxon>Eukaryota</taxon>
        <taxon>Fungi</taxon>
        <taxon>Dikarya</taxon>
        <taxon>Ascomycota</taxon>
        <taxon>Saccharomycotina</taxon>
        <taxon>Pichiomycetes</taxon>
        <taxon>Debaryomycetaceae</taxon>
        <taxon>Debaryomyces</taxon>
    </lineage>
</organism>